<reference key="1">
    <citation type="journal article" date="2008" name="Genome Biol.">
        <title>The complete genome, comparative and functional analysis of Stenotrophomonas maltophilia reveals an organism heavily shielded by drug resistance determinants.</title>
        <authorList>
            <person name="Crossman L.C."/>
            <person name="Gould V.C."/>
            <person name="Dow J.M."/>
            <person name="Vernikos G.S."/>
            <person name="Okazaki A."/>
            <person name="Sebaihia M."/>
            <person name="Saunders D."/>
            <person name="Arrowsmith C."/>
            <person name="Carver T."/>
            <person name="Peters N."/>
            <person name="Adlem E."/>
            <person name="Kerhornou A."/>
            <person name="Lord A."/>
            <person name="Murphy L."/>
            <person name="Seeger K."/>
            <person name="Squares R."/>
            <person name="Rutter S."/>
            <person name="Quail M.A."/>
            <person name="Rajandream M.A."/>
            <person name="Harris D."/>
            <person name="Churcher C."/>
            <person name="Bentley S.D."/>
            <person name="Parkhill J."/>
            <person name="Thomson N.R."/>
            <person name="Avison M.B."/>
        </authorList>
    </citation>
    <scope>NUCLEOTIDE SEQUENCE [LARGE SCALE GENOMIC DNA]</scope>
    <source>
        <strain>K279a</strain>
    </source>
</reference>
<comment type="function">
    <text evidence="1">Displays ATPase and GTPase activities.</text>
</comment>
<comment type="similarity">
    <text evidence="1">Belongs to the RapZ-like family.</text>
</comment>
<feature type="chain" id="PRO_0000383292" description="Nucleotide-binding protein Smlt1108">
    <location>
        <begin position="1"/>
        <end position="294"/>
    </location>
</feature>
<feature type="binding site" evidence="1">
    <location>
        <begin position="16"/>
        <end position="23"/>
    </location>
    <ligand>
        <name>ATP</name>
        <dbReference type="ChEBI" id="CHEBI:30616"/>
    </ligand>
</feature>
<feature type="binding site" evidence="1">
    <location>
        <begin position="69"/>
        <end position="72"/>
    </location>
    <ligand>
        <name>GTP</name>
        <dbReference type="ChEBI" id="CHEBI:37565"/>
    </ligand>
</feature>
<protein>
    <recommendedName>
        <fullName evidence="1">Nucleotide-binding protein Smlt1108</fullName>
    </recommendedName>
</protein>
<sequence length="294" mass="32879">MSTVTPSAPTLIIVSGLSGSGKSVALKTFEDQDYYCSDNLPINLLPDFVRSLLANHDGSAPRRLAVGIDVRGQADLSQLGDWRQLAADAGVDVKVLFFEASDETLLKRYADTRRRHPLSQLGLSLPEAIARERELTAPLRREADAVIDTSSLNVHQLRRRIITEFTMDHATGLSLLFESFAYKRGVPAEADFVFDARVLPNPHWDPDLRALSGREPGVRDYLEAQPDVQRYLAQLMDFLDTWLPKLGDGTRSYVTVAFGCTGGKHRSVFLAERLARHAREMGWEDVATYHREQD</sequence>
<keyword id="KW-0067">ATP-binding</keyword>
<keyword id="KW-0342">GTP-binding</keyword>
<keyword id="KW-0547">Nucleotide-binding</keyword>
<keyword id="KW-1185">Reference proteome</keyword>
<organism>
    <name type="scientific">Stenotrophomonas maltophilia (strain K279a)</name>
    <dbReference type="NCBI Taxonomy" id="522373"/>
    <lineage>
        <taxon>Bacteria</taxon>
        <taxon>Pseudomonadati</taxon>
        <taxon>Pseudomonadota</taxon>
        <taxon>Gammaproteobacteria</taxon>
        <taxon>Lysobacterales</taxon>
        <taxon>Lysobacteraceae</taxon>
        <taxon>Stenotrophomonas</taxon>
        <taxon>Stenotrophomonas maltophilia group</taxon>
    </lineage>
</organism>
<accession>B2FRW0</accession>
<name>Y1108_STRMK</name>
<proteinExistence type="inferred from homology"/>
<gene>
    <name type="ordered locus">Smlt1108</name>
</gene>
<dbReference type="EMBL" id="AM743169">
    <property type="protein sequence ID" value="CAQ44665.1"/>
    <property type="molecule type" value="Genomic_DNA"/>
</dbReference>
<dbReference type="RefSeq" id="WP_012479342.1">
    <property type="nucleotide sequence ID" value="NC_010943.1"/>
</dbReference>
<dbReference type="SMR" id="B2FRW0"/>
<dbReference type="EnsemblBacteria" id="CAQ44665">
    <property type="protein sequence ID" value="CAQ44665"/>
    <property type="gene ID" value="Smlt1108"/>
</dbReference>
<dbReference type="KEGG" id="sml:Smlt1108"/>
<dbReference type="PATRIC" id="fig|522373.3.peg.1071"/>
<dbReference type="eggNOG" id="COG1660">
    <property type="taxonomic scope" value="Bacteria"/>
</dbReference>
<dbReference type="HOGENOM" id="CLU_059558_1_1_6"/>
<dbReference type="Proteomes" id="UP000008840">
    <property type="component" value="Chromosome"/>
</dbReference>
<dbReference type="GO" id="GO:0005524">
    <property type="term" value="F:ATP binding"/>
    <property type="evidence" value="ECO:0007669"/>
    <property type="project" value="UniProtKB-UniRule"/>
</dbReference>
<dbReference type="GO" id="GO:0005525">
    <property type="term" value="F:GTP binding"/>
    <property type="evidence" value="ECO:0007669"/>
    <property type="project" value="UniProtKB-UniRule"/>
</dbReference>
<dbReference type="Gene3D" id="3.40.50.300">
    <property type="entry name" value="P-loop containing nucleotide triphosphate hydrolases"/>
    <property type="match status" value="1"/>
</dbReference>
<dbReference type="HAMAP" id="MF_00636">
    <property type="entry name" value="RapZ_like"/>
    <property type="match status" value="1"/>
</dbReference>
<dbReference type="InterPro" id="IPR027417">
    <property type="entry name" value="P-loop_NTPase"/>
</dbReference>
<dbReference type="InterPro" id="IPR005337">
    <property type="entry name" value="RapZ-like"/>
</dbReference>
<dbReference type="InterPro" id="IPR053930">
    <property type="entry name" value="RapZ-like_N"/>
</dbReference>
<dbReference type="InterPro" id="IPR053931">
    <property type="entry name" value="RapZ_C"/>
</dbReference>
<dbReference type="NCBIfam" id="NF003828">
    <property type="entry name" value="PRK05416.1"/>
    <property type="match status" value="1"/>
</dbReference>
<dbReference type="PANTHER" id="PTHR30448">
    <property type="entry name" value="RNASE ADAPTER PROTEIN RAPZ"/>
    <property type="match status" value="1"/>
</dbReference>
<dbReference type="PANTHER" id="PTHR30448:SF0">
    <property type="entry name" value="RNASE ADAPTER PROTEIN RAPZ"/>
    <property type="match status" value="1"/>
</dbReference>
<dbReference type="Pfam" id="PF22740">
    <property type="entry name" value="PapZ_C"/>
    <property type="match status" value="1"/>
</dbReference>
<dbReference type="Pfam" id="PF03668">
    <property type="entry name" value="RapZ-like_N"/>
    <property type="match status" value="1"/>
</dbReference>
<dbReference type="PIRSF" id="PIRSF005052">
    <property type="entry name" value="P-loopkin"/>
    <property type="match status" value="1"/>
</dbReference>
<dbReference type="SUPFAM" id="SSF52540">
    <property type="entry name" value="P-loop containing nucleoside triphosphate hydrolases"/>
    <property type="match status" value="1"/>
</dbReference>
<evidence type="ECO:0000255" key="1">
    <source>
        <dbReference type="HAMAP-Rule" id="MF_00636"/>
    </source>
</evidence>